<accession>Q1G9L2</accession>
<name>RS16_LACDA</name>
<keyword id="KW-1185">Reference proteome</keyword>
<keyword id="KW-0687">Ribonucleoprotein</keyword>
<keyword id="KW-0689">Ribosomal protein</keyword>
<feature type="chain" id="PRO_1000049274" description="Small ribosomal subunit protein bS16">
    <location>
        <begin position="1"/>
        <end position="90"/>
    </location>
</feature>
<gene>
    <name evidence="1" type="primary">rpsP</name>
    <name type="ordered locus">Ldb1371</name>
</gene>
<comment type="similarity">
    <text evidence="1">Belongs to the bacterial ribosomal protein bS16 family.</text>
</comment>
<protein>
    <recommendedName>
        <fullName evidence="1">Small ribosomal subunit protein bS16</fullName>
    </recommendedName>
    <alternativeName>
        <fullName evidence="2">30S ribosomal protein S16</fullName>
    </alternativeName>
</protein>
<sequence>MSVKIRMRRMGAKRKPFYRIVVADSRAPRDGRFIEEVGYYNPVSQPKELKLDEDKIFEWLKKGAQPSDTVRSFLSSAGLMAKLHDEKYNK</sequence>
<reference key="1">
    <citation type="journal article" date="2006" name="Proc. Natl. Acad. Sci. U.S.A.">
        <title>The complete genome sequence of Lactobacillus bulgaricus reveals extensive and ongoing reductive evolution.</title>
        <authorList>
            <person name="van de Guchte M."/>
            <person name="Penaud S."/>
            <person name="Grimaldi C."/>
            <person name="Barbe V."/>
            <person name="Bryson K."/>
            <person name="Nicolas P."/>
            <person name="Robert C."/>
            <person name="Oztas S."/>
            <person name="Mangenot S."/>
            <person name="Couloux A."/>
            <person name="Loux V."/>
            <person name="Dervyn R."/>
            <person name="Bossy R."/>
            <person name="Bolotin A."/>
            <person name="Batto J.-M."/>
            <person name="Walunas T."/>
            <person name="Gibrat J.-F."/>
            <person name="Bessieres P."/>
            <person name="Weissenbach J."/>
            <person name="Ehrlich S.D."/>
            <person name="Maguin E."/>
        </authorList>
    </citation>
    <scope>NUCLEOTIDE SEQUENCE [LARGE SCALE GENOMIC DNA]</scope>
    <source>
        <strain>ATCC 11842 / DSM 20081 / BCRC 10696 / JCM 1002 / NBRC 13953 / NCIMB 11778 / NCTC 12712 / WDCM 00102 / Lb 14</strain>
    </source>
</reference>
<organism>
    <name type="scientific">Lactobacillus delbrueckii subsp. bulgaricus (strain ATCC 11842 / DSM 20081 / BCRC 10696 / JCM 1002 / NBRC 13953 / NCIMB 11778 / NCTC 12712 / WDCM 00102 / Lb 14)</name>
    <dbReference type="NCBI Taxonomy" id="390333"/>
    <lineage>
        <taxon>Bacteria</taxon>
        <taxon>Bacillati</taxon>
        <taxon>Bacillota</taxon>
        <taxon>Bacilli</taxon>
        <taxon>Lactobacillales</taxon>
        <taxon>Lactobacillaceae</taxon>
        <taxon>Lactobacillus</taxon>
    </lineage>
</organism>
<proteinExistence type="inferred from homology"/>
<dbReference type="EMBL" id="CR954253">
    <property type="protein sequence ID" value="CAI98172.1"/>
    <property type="molecule type" value="Genomic_DNA"/>
</dbReference>
<dbReference type="RefSeq" id="WP_011544017.1">
    <property type="nucleotide sequence ID" value="NZ_JQAV01000006.1"/>
</dbReference>
<dbReference type="SMR" id="Q1G9L2"/>
<dbReference type="STRING" id="390333.Ldb1371"/>
<dbReference type="KEGG" id="ldb:Ldb1371"/>
<dbReference type="eggNOG" id="COG0228">
    <property type="taxonomic scope" value="Bacteria"/>
</dbReference>
<dbReference type="HOGENOM" id="CLU_100590_5_0_9"/>
<dbReference type="BioCyc" id="LDEL390333:LDB_RS05885-MONOMER"/>
<dbReference type="Proteomes" id="UP000001259">
    <property type="component" value="Chromosome"/>
</dbReference>
<dbReference type="GO" id="GO:0005737">
    <property type="term" value="C:cytoplasm"/>
    <property type="evidence" value="ECO:0007669"/>
    <property type="project" value="UniProtKB-ARBA"/>
</dbReference>
<dbReference type="GO" id="GO:0015935">
    <property type="term" value="C:small ribosomal subunit"/>
    <property type="evidence" value="ECO:0007669"/>
    <property type="project" value="TreeGrafter"/>
</dbReference>
<dbReference type="GO" id="GO:0003735">
    <property type="term" value="F:structural constituent of ribosome"/>
    <property type="evidence" value="ECO:0007669"/>
    <property type="project" value="InterPro"/>
</dbReference>
<dbReference type="GO" id="GO:0006412">
    <property type="term" value="P:translation"/>
    <property type="evidence" value="ECO:0007669"/>
    <property type="project" value="UniProtKB-UniRule"/>
</dbReference>
<dbReference type="FunFam" id="3.30.1320.10:FF:000002">
    <property type="entry name" value="30S ribosomal protein S16"/>
    <property type="match status" value="1"/>
</dbReference>
<dbReference type="Gene3D" id="3.30.1320.10">
    <property type="match status" value="1"/>
</dbReference>
<dbReference type="HAMAP" id="MF_00385">
    <property type="entry name" value="Ribosomal_bS16"/>
    <property type="match status" value="1"/>
</dbReference>
<dbReference type="InterPro" id="IPR000307">
    <property type="entry name" value="Ribosomal_bS16"/>
</dbReference>
<dbReference type="InterPro" id="IPR023803">
    <property type="entry name" value="Ribosomal_bS16_dom_sf"/>
</dbReference>
<dbReference type="NCBIfam" id="TIGR00002">
    <property type="entry name" value="S16"/>
    <property type="match status" value="1"/>
</dbReference>
<dbReference type="PANTHER" id="PTHR12919">
    <property type="entry name" value="30S RIBOSOMAL PROTEIN S16"/>
    <property type="match status" value="1"/>
</dbReference>
<dbReference type="PANTHER" id="PTHR12919:SF20">
    <property type="entry name" value="SMALL RIBOSOMAL SUBUNIT PROTEIN BS16M"/>
    <property type="match status" value="1"/>
</dbReference>
<dbReference type="Pfam" id="PF00886">
    <property type="entry name" value="Ribosomal_S16"/>
    <property type="match status" value="1"/>
</dbReference>
<dbReference type="SUPFAM" id="SSF54565">
    <property type="entry name" value="Ribosomal protein S16"/>
    <property type="match status" value="1"/>
</dbReference>
<evidence type="ECO:0000255" key="1">
    <source>
        <dbReference type="HAMAP-Rule" id="MF_00385"/>
    </source>
</evidence>
<evidence type="ECO:0000305" key="2"/>